<proteinExistence type="inferred from homology"/>
<keyword id="KW-0030">Aminoacyl-tRNA synthetase</keyword>
<keyword id="KW-0067">ATP-binding</keyword>
<keyword id="KW-0963">Cytoplasm</keyword>
<keyword id="KW-0436">Ligase</keyword>
<keyword id="KW-0547">Nucleotide-binding</keyword>
<keyword id="KW-0648">Protein biosynthesis</keyword>
<comment type="catalytic activity">
    <reaction evidence="1">
        <text>tRNA(Leu) + L-leucine + ATP = L-leucyl-tRNA(Leu) + AMP + diphosphate</text>
        <dbReference type="Rhea" id="RHEA:11688"/>
        <dbReference type="Rhea" id="RHEA-COMP:9613"/>
        <dbReference type="Rhea" id="RHEA-COMP:9622"/>
        <dbReference type="ChEBI" id="CHEBI:30616"/>
        <dbReference type="ChEBI" id="CHEBI:33019"/>
        <dbReference type="ChEBI" id="CHEBI:57427"/>
        <dbReference type="ChEBI" id="CHEBI:78442"/>
        <dbReference type="ChEBI" id="CHEBI:78494"/>
        <dbReference type="ChEBI" id="CHEBI:456215"/>
        <dbReference type="EC" id="6.1.1.4"/>
    </reaction>
</comment>
<comment type="subcellular location">
    <subcellularLocation>
        <location evidence="1">Cytoplasm</location>
    </subcellularLocation>
</comment>
<comment type="similarity">
    <text evidence="1">Belongs to the class-I aminoacyl-tRNA synthetase family.</text>
</comment>
<protein>
    <recommendedName>
        <fullName evidence="1">Leucine--tRNA ligase</fullName>
        <ecNumber evidence="1">6.1.1.4</ecNumber>
    </recommendedName>
    <alternativeName>
        <fullName evidence="1">Leucyl-tRNA synthetase</fullName>
        <shortName evidence="1">LeuRS</shortName>
    </alternativeName>
</protein>
<organism>
    <name type="scientific">Bacillus cereus (strain B4264)</name>
    <dbReference type="NCBI Taxonomy" id="405532"/>
    <lineage>
        <taxon>Bacteria</taxon>
        <taxon>Bacillati</taxon>
        <taxon>Bacillota</taxon>
        <taxon>Bacilli</taxon>
        <taxon>Bacillales</taxon>
        <taxon>Bacillaceae</taxon>
        <taxon>Bacillus</taxon>
        <taxon>Bacillus cereus group</taxon>
    </lineage>
</organism>
<dbReference type="EC" id="6.1.1.4" evidence="1"/>
<dbReference type="EMBL" id="CP001176">
    <property type="protein sequence ID" value="ACK59437.1"/>
    <property type="molecule type" value="Genomic_DNA"/>
</dbReference>
<dbReference type="RefSeq" id="WP_000009462.1">
    <property type="nucleotide sequence ID" value="NC_011725.1"/>
</dbReference>
<dbReference type="SMR" id="B7H798"/>
<dbReference type="KEGG" id="bcb:BCB4264_A4851"/>
<dbReference type="HOGENOM" id="CLU_004427_0_0_9"/>
<dbReference type="Proteomes" id="UP000007096">
    <property type="component" value="Chromosome"/>
</dbReference>
<dbReference type="GO" id="GO:0005829">
    <property type="term" value="C:cytosol"/>
    <property type="evidence" value="ECO:0007669"/>
    <property type="project" value="TreeGrafter"/>
</dbReference>
<dbReference type="GO" id="GO:0002161">
    <property type="term" value="F:aminoacyl-tRNA deacylase activity"/>
    <property type="evidence" value="ECO:0007669"/>
    <property type="project" value="InterPro"/>
</dbReference>
<dbReference type="GO" id="GO:0005524">
    <property type="term" value="F:ATP binding"/>
    <property type="evidence" value="ECO:0007669"/>
    <property type="project" value="UniProtKB-UniRule"/>
</dbReference>
<dbReference type="GO" id="GO:0004823">
    <property type="term" value="F:leucine-tRNA ligase activity"/>
    <property type="evidence" value="ECO:0007669"/>
    <property type="project" value="UniProtKB-UniRule"/>
</dbReference>
<dbReference type="GO" id="GO:0006429">
    <property type="term" value="P:leucyl-tRNA aminoacylation"/>
    <property type="evidence" value="ECO:0007669"/>
    <property type="project" value="UniProtKB-UniRule"/>
</dbReference>
<dbReference type="CDD" id="cd07958">
    <property type="entry name" value="Anticodon_Ia_Leu_BEm"/>
    <property type="match status" value="1"/>
</dbReference>
<dbReference type="CDD" id="cd00812">
    <property type="entry name" value="LeuRS_core"/>
    <property type="match status" value="1"/>
</dbReference>
<dbReference type="FunFam" id="1.10.730.10:FF:000012">
    <property type="entry name" value="Leucine--tRNA ligase"/>
    <property type="match status" value="1"/>
</dbReference>
<dbReference type="FunFam" id="1.10.730.10:FF:000018">
    <property type="entry name" value="Leucine--tRNA ligase"/>
    <property type="match status" value="1"/>
</dbReference>
<dbReference type="FunFam" id="3.10.20.590:FF:000001">
    <property type="entry name" value="Leucine--tRNA ligase"/>
    <property type="match status" value="1"/>
</dbReference>
<dbReference type="FunFam" id="3.40.50.620:FF:000056">
    <property type="entry name" value="Leucine--tRNA ligase"/>
    <property type="match status" value="1"/>
</dbReference>
<dbReference type="FunFam" id="3.40.50.620:FF:000077">
    <property type="entry name" value="Leucine--tRNA ligase"/>
    <property type="match status" value="1"/>
</dbReference>
<dbReference type="FunFam" id="3.90.740.10:FF:000049">
    <property type="entry name" value="Os01g0120300 protein"/>
    <property type="match status" value="1"/>
</dbReference>
<dbReference type="Gene3D" id="3.10.20.590">
    <property type="match status" value="1"/>
</dbReference>
<dbReference type="Gene3D" id="3.40.50.620">
    <property type="entry name" value="HUPs"/>
    <property type="match status" value="2"/>
</dbReference>
<dbReference type="Gene3D" id="1.10.730.10">
    <property type="entry name" value="Isoleucyl-tRNA Synthetase, Domain 1"/>
    <property type="match status" value="1"/>
</dbReference>
<dbReference type="HAMAP" id="MF_00049_B">
    <property type="entry name" value="Leu_tRNA_synth_B"/>
    <property type="match status" value="1"/>
</dbReference>
<dbReference type="InterPro" id="IPR001412">
    <property type="entry name" value="aa-tRNA-synth_I_CS"/>
</dbReference>
<dbReference type="InterPro" id="IPR002300">
    <property type="entry name" value="aa-tRNA-synth_Ia"/>
</dbReference>
<dbReference type="InterPro" id="IPR002302">
    <property type="entry name" value="Leu-tRNA-ligase"/>
</dbReference>
<dbReference type="InterPro" id="IPR025709">
    <property type="entry name" value="Leu_tRNA-synth_edit"/>
</dbReference>
<dbReference type="InterPro" id="IPR013155">
    <property type="entry name" value="M/V/L/I-tRNA-synth_anticd-bd"/>
</dbReference>
<dbReference type="InterPro" id="IPR015413">
    <property type="entry name" value="Methionyl/Leucyl_tRNA_Synth"/>
</dbReference>
<dbReference type="InterPro" id="IPR014729">
    <property type="entry name" value="Rossmann-like_a/b/a_fold"/>
</dbReference>
<dbReference type="InterPro" id="IPR009080">
    <property type="entry name" value="tRNAsynth_Ia_anticodon-bd"/>
</dbReference>
<dbReference type="InterPro" id="IPR009008">
    <property type="entry name" value="Val/Leu/Ile-tRNA-synth_edit"/>
</dbReference>
<dbReference type="NCBIfam" id="TIGR00396">
    <property type="entry name" value="leuS_bact"/>
    <property type="match status" value="1"/>
</dbReference>
<dbReference type="PANTHER" id="PTHR43740:SF2">
    <property type="entry name" value="LEUCINE--TRNA LIGASE, MITOCHONDRIAL"/>
    <property type="match status" value="1"/>
</dbReference>
<dbReference type="PANTHER" id="PTHR43740">
    <property type="entry name" value="LEUCYL-TRNA SYNTHETASE"/>
    <property type="match status" value="1"/>
</dbReference>
<dbReference type="Pfam" id="PF08264">
    <property type="entry name" value="Anticodon_1"/>
    <property type="match status" value="1"/>
</dbReference>
<dbReference type="Pfam" id="PF00133">
    <property type="entry name" value="tRNA-synt_1"/>
    <property type="match status" value="1"/>
</dbReference>
<dbReference type="Pfam" id="PF13603">
    <property type="entry name" value="tRNA-synt_1_2"/>
    <property type="match status" value="1"/>
</dbReference>
<dbReference type="Pfam" id="PF09334">
    <property type="entry name" value="tRNA-synt_1g"/>
    <property type="match status" value="1"/>
</dbReference>
<dbReference type="PRINTS" id="PR00985">
    <property type="entry name" value="TRNASYNTHLEU"/>
</dbReference>
<dbReference type="SUPFAM" id="SSF47323">
    <property type="entry name" value="Anticodon-binding domain of a subclass of class I aminoacyl-tRNA synthetases"/>
    <property type="match status" value="1"/>
</dbReference>
<dbReference type="SUPFAM" id="SSF52374">
    <property type="entry name" value="Nucleotidylyl transferase"/>
    <property type="match status" value="1"/>
</dbReference>
<dbReference type="SUPFAM" id="SSF50677">
    <property type="entry name" value="ValRS/IleRS/LeuRS editing domain"/>
    <property type="match status" value="1"/>
</dbReference>
<dbReference type="PROSITE" id="PS00178">
    <property type="entry name" value="AA_TRNA_LIGASE_I"/>
    <property type="match status" value="1"/>
</dbReference>
<gene>
    <name evidence="1" type="primary">leuS</name>
    <name type="ordered locus">BCB4264_A4851</name>
</gene>
<evidence type="ECO:0000255" key="1">
    <source>
        <dbReference type="HAMAP-Rule" id="MF_00049"/>
    </source>
</evidence>
<feature type="chain" id="PRO_1000199178" description="Leucine--tRNA ligase">
    <location>
        <begin position="1"/>
        <end position="802"/>
    </location>
</feature>
<feature type="short sequence motif" description="'HIGH' region">
    <location>
        <begin position="40"/>
        <end position="51"/>
    </location>
</feature>
<feature type="short sequence motif" description="'KMSKS' region">
    <location>
        <begin position="576"/>
        <end position="580"/>
    </location>
</feature>
<feature type="binding site" evidence="1">
    <location>
        <position position="579"/>
    </location>
    <ligand>
        <name>ATP</name>
        <dbReference type="ChEBI" id="CHEBI:30616"/>
    </ligand>
</feature>
<accession>B7H798</accession>
<reference key="1">
    <citation type="submission" date="2008-10" db="EMBL/GenBank/DDBJ databases">
        <title>Genome sequence of Bacillus cereus B4264.</title>
        <authorList>
            <person name="Dodson R.J."/>
            <person name="Durkin A.S."/>
            <person name="Rosovitz M.J."/>
            <person name="Rasko D.A."/>
            <person name="Hoffmaster A."/>
            <person name="Ravel J."/>
            <person name="Sutton G."/>
        </authorList>
    </citation>
    <scope>NUCLEOTIDE SEQUENCE [LARGE SCALE GENOMIC DNA]</scope>
    <source>
        <strain>B4264</strain>
    </source>
</reference>
<sequence length="802" mass="91339">MSFNHQEIEKKWQGYWEENKTFRTPDETEKPKFYALDMFPYPSGAGLHVGHPEGYTATDILSRMKRMQGYNVLHPMGWDAFGLPAEQYALDTGNSPAEFTEHNINTFRNQIKSLGFSYDWDREVNTTDPNYYKWTQWIFLKLFEKGLAYVDEVPVNWCPALGTVLANEEIIDGKSERGGHPVERRPMRQWMLKITAYGDRLLEDLDELDWPESLKDMQRNWIGRSEGAEVHFNIDGTDEKFTVFTTRPDTLFGATYCVLAPEHALVAEITTAEQKEAVEAYINAVKMKSDLERTELAKEKTGVFTGAYAVNPVNGEKLPIWIADYVLATYGTGAVMAVPAHDERDYEFASVFNLPMKEVVKGGDITKEVYTGDGAHVNSAFLDGLNKEEAIAKMIEWLEATSAGNQKVTYRLRDWLFSRQRYWGEPIPVIHWEDGTMTAVKEEELPLVLPKTENIRPSGTGESPLANIDEWVNVVDPETGKKGRRETNTMPQWAGSCWYYLRYIDPNNSEALVDPEKVKQWLPVDIYIGGAEHAVLHLLYARFWHKVLYDIGVVPTKEPFQQLFNQGMILGENNEKMSKSKGNVVNPDDIVASHGADTLRLYEMFMGPLDASIAWSENGLDGARRFLDRVWRLFVQDNGELSEKITDAPNKELEKAYHQTVKKVTEDYAELRFNTAISQMMVFINDAYKAETLPREYVEGFVKMIAPVAPHIGEELWSKLGYNETITYASWPTFDESKLVEDEVEIVVQVMGKVRAKLTMSKDASKEEMEQLALEAIQDQIEGKTVRKVVVVPGKLVNVVAN</sequence>
<name>SYL_BACC4</name>